<comment type="function">
    <molecule>Capsid protein</molecule>
    <text evidence="1 2 3 4 5 15">Forms an icosahedral capsid with a T=4 symmetry composed of 240 copies of the capsid protein surrounded by a lipid membrane through which penetrate 80 spikes composed of trimers of E1-E2 heterodimers (PubMed:38176410). The capsid protein binds to the viral RNA genome at a site adjacent to a ribosome binding site for viral genome translation following genome release (By similarity). Possesses a protease activity that results in its autocatalytic cleavage from the nascent structural protein (By similarity). Following its self-cleavage, the capsid protein transiently associates with ribosomes, and within several minutes the protein binds to viral RNA and rapidly assembles into icosahedric core particles (By similarity). The resulting nucleocapsid eventually associates with the cytoplasmic domain of the spike glycoprotein E2 at the cell membrane, leading to budding and formation of mature virions (By similarity). In case of infection, new virions attach to target cells and after clathrin-mediated endocytosis their membrane fuses with the host endosomal membrane (By similarity). This leads to the release of the nucleocapsid into the cytoplasm, followed by an uncoating event necessary for the genomic RNA to become accessible (By similarity). The uncoating might be triggered by the interaction of capsid proteins with ribosomes (By similarity). Binding of ribosomes would release the genomic RNA since the same region is genomic RNA-binding and ribosome-binding (By similarity). Specifically inhibits interleukin-1 receptor-associated kinase 1/IRAK1-dependent signaling during viral entry, representing a means by which the alphaviruses may evade innate immune detection and activation prior to viral gene expression (By similarity). Inhibits host transcription (By similarity). Forms a tetrameric complex with XPO1/CRM1 and the nuclear import receptor importin (By similarity). This complex blocks the central channel of host nuclear pores thereby inhibiting the receptor-mediated nuclear transport and thus the host mRNA and rRNA transcription (By similarity). The inhibition of transcription is linked to a cytopathic effect on the host cell (By similarity).</text>
</comment>
<comment type="function">
    <molecule>Assembly protein E3</molecule>
    <text evidence="1">Provides the signal sequence for the translocation of the precursor of protein E3/E2 to the host endoplasmic reticulum. Furin-cleaved E3 remains associated with spike glycoprotein E1 and mediates pH protection of the latter during the transport via the secretory pathway. After virion release from the host cell, the assembly protein E3 is gradually released in the extracellular space.</text>
</comment>
<comment type="function">
    <molecule>Spike glycoprotein E2</molecule>
    <text evidence="1 13 15 16">Plays a role in viral attachment to target host cell, by binding to the cell receptors VLDLR or LRP8/APOER2 (PubMed:34929721, PubMed:38176410, PubMed:39095394). Synthesized as a p62 precursor which is processed by furin at the cell membrane just before virion budding, giving rise to E2-E1 heterodimer. The p62-E1 heterodimer is stable, whereas E2-E1 is unstable and dissociate at low pH. p62 is processed at the last step, presumably to avoid E1 fusion activation before its final export to cell surface. E2 C-terminus contains a transitory transmembrane that would be disrupted by palmitoylation, resulting in reorientation of the C-terminal tail from lumenal to cytoplasmic side. This step is critical since E2 C-terminus is involved in budding by interacting with capsid proteins. This release of E2 C-terminus in cytoplasm occurs lately in protein export, and precludes premature assembly of particles at the endoplasmic reticulum membrane.</text>
</comment>
<comment type="function">
    <molecule>6K protein</molecule>
    <text evidence="1 2">Acts as a viroporin that participates in virus glycoprotein processing and transport to the plasma membrane, cell permeabilization and budding of viral particles (By similarity). Disrupts the calcium homeostasis of the cell, probably at the endoplasmic reticulum level (By similarity). This leads to cytoplasmic calcium elevation (By similarity). Because of its lipophilic properties, the 6K protein is postulated to influence the selection of lipids that interact with the transmembrane domains of the glycoproteins, which, in turn, affects the deformability of the bilayer required for the extreme curvature that occurs as budding proceeds. Present in low amount in virions, about 3% compared to viral glycoproteins (By similarity).</text>
</comment>
<comment type="function">
    <molecule>Spike glycoprotein E1</molecule>
    <text evidence="2 13">Class II viral fusion protein. Fusion activity is inactive as long as E1 is bound to E2 in mature virion (By similarity). After virus attachment to target cell via host VLDLR or LRP8/APOER2 and endocytosis, acidification of the endosome induces dissociation of E1/E2 heterodimer and concomitant trimerization of the E1 subunits (PubMed:34929721). This E1 trimer is fusion active, and promotes release of viral nucleocapsid in cytoplasm after endosome and viral membrane fusion. Efficient fusion requires the presence of cholesterol and sphingolipid in the target membrane (By similarity).</text>
</comment>
<comment type="catalytic activity">
    <reaction evidence="2">
        <text>Autocatalytic release of the core protein from the N-terminus of the togavirus structural polyprotein by hydrolysis of a -Trp-|-Ser- bond.</text>
        <dbReference type="EC" id="3.4.21.90"/>
    </reaction>
</comment>
<comment type="subunit">
    <molecule>Capsid protein</molecule>
    <text evidence="2 3 8 9">Homodimer (By similarity). Homomultimer (By similarity). Interacts with host karyopherin KPNA4; this interaction allows the nuclear import of the viral capsid protein (By similarity). Interacts with spike glycoprotein E2 (By similarity). Interacts with host IRAK1; the interaction leads to inhibition of IRAK1-dependent signaling (By similarity). Part of a tetrameric complex composed of host CRM1, host importin alpha/beta dimer and the viral capsid; this complex blocks the receptor-mediated transport through the nuclear pore (By similarity). Interacts with host phosphatase PPP1CA; this interaction dephosphorylates the capsid protein, which increases its ability to bind to the viral genome (By similarity).</text>
</comment>
<comment type="subunit">
    <molecule>Precursor of protein E3/E2</molecule>
    <text evidence="1 2 3">The precursor of protein E3/E2 and E1 form a heterodimer shortly after synthesis (By similarity).</text>
</comment>
<comment type="subunit">
    <molecule>Spike glycoprotein E1</molecule>
    <text evidence="2 9 13">The precursor of protein E3/E2 and E1 form a heterodimer shortly after synthesis (By similarity). Processing of the precursor of protein E3/E2 into E2 and E3 results in a heterodimer of the spike glycoproteins E2 and E1 (By similarity). Spike at virion surface are constituted of three E2-E1 heterodimers (By similarity). After target cell attachment and endocytosis, E1 change conformation to form homotrimers (By similarity). E2-E1 heterodimers interact with host VLDLR or LRP8/APOER2 to mediate viral entry (PubMed:34929721). Interacts with 6K protein (By similarity).</text>
</comment>
<comment type="subunit">
    <molecule>Spike glycoprotein E2</molecule>
    <text evidence="2 13 15 16 18">Interacts with spike glycoprotein E1 (By similarity). Processing of the precursor of protein E3/E2 into E2 and E3 results in a heterodimer of the spike glycoproteins E2 and E1 (By similarity). Spike at virion surface are constituted of a trimer of E2-E1 heterodimers (Probable). Interacts with 6K protein (By similarity). E2-E1 heterodimers interact with host VLDLR or LRP8/APOER2 to mediate viral entry (PubMed:34929721). Interacts (via E2-A) with host VLDLR (via class A repeats); this interaction mediates viral entry into host cell (PubMed:38176410, PubMed:39095394). Interacts with host LRP8/APOER2 (via class A repeats); this interaction mediates viral entry into host cell (PubMed:39095394).</text>
</comment>
<comment type="subunit">
    <molecule>6K protein</molecule>
    <text evidence="2 6">Oligomer (By similarity). Interacts with spike glycoprotein E1. Interacts with spike glycoprotein E2 (By similarity).</text>
</comment>
<comment type="subcellular location">
    <molecule>Capsid protein</molecule>
    <subcellularLocation>
        <location evidence="2">Virion</location>
    </subcellularLocation>
    <subcellularLocation>
        <location evidence="3">Host cytoplasm</location>
    </subcellularLocation>
    <subcellularLocation>
        <location evidence="2">Host cell membrane</location>
    </subcellularLocation>
    <subcellularLocation>
        <location evidence="3">Host nucleus</location>
    </subcellularLocation>
</comment>
<comment type="subcellular location">
    <molecule>Spike glycoprotein E2</molecule>
    <subcellularLocation>
        <location evidence="9">Virion membrane</location>
        <topology evidence="10">Single-pass type I membrane protein</topology>
    </subcellularLocation>
    <subcellularLocation>
        <location evidence="2">Host cell membrane</location>
        <topology evidence="9">Single-pass type I membrane protein</topology>
    </subcellularLocation>
</comment>
<comment type="subcellular location">
    <molecule>6K protein</molecule>
    <subcellularLocation>
        <location evidence="2">Host cell membrane</location>
        <topology evidence="10">Multi-pass membrane protein</topology>
    </subcellularLocation>
    <subcellularLocation>
        <location evidence="2">Virion membrane</location>
        <topology evidence="10">Multi-pass membrane protein</topology>
    </subcellularLocation>
    <subcellularLocation>
        <location evidence="2">Host Golgi apparatus</location>
    </subcellularLocation>
    <subcellularLocation>
        <location>Host Golgi apparatus</location>
        <location>Host trans-Golgi network</location>
    </subcellularLocation>
    <subcellularLocation>
        <location evidence="2">Host endoplasmic reticulum</location>
    </subcellularLocation>
</comment>
<comment type="subcellular location">
    <molecule>Spike glycoprotein E1</molecule>
    <subcellularLocation>
        <location evidence="9">Virion membrane</location>
        <topology evidence="10">Single-pass type I membrane protein</topology>
    </subcellularLocation>
    <subcellularLocation>
        <location evidence="2 9">Host cell membrane</location>
        <topology evidence="10">Single-pass type I membrane protein</topology>
    </subcellularLocation>
</comment>
<comment type="domain">
    <text evidence="1">Structural polyprotein: As soon as the capsid protein has been autocleaved, an internal uncleaved signal peptide directs the remaining polyprotein to the endoplasmic reticulum.</text>
</comment>
<comment type="domain">
    <molecule>Capsid protein</molecule>
    <text evidence="2 3">The very N-terminus plays a role in the particle assembly process (By similarity). The N-terminus also contains a nuclear localization signal and a supraphysiological nuclear export signal (supraNES), which is an unusually strong NES that mediates host CRM1 binding in the absence of RanGTP and thus can bind CRM1, not only in the nucleus, but also in the cytoplasm (By similarity). The C-terminus functions as a protease during translation to cleave itself from the translating structural polyprotein (By similarity).</text>
</comment>
<comment type="PTM">
    <text evidence="1">Structural polyprotein: Specific enzymatic cleavages in vivo yield mature proteins. Capsid protein is auto-cleaved during polyprotein translation, unmasking a signal peptide at the N-terminus of the precursor of E3/E2. The remaining polyprotein is then targeted to the host endoplasmic reticulum, where host signal peptidase cleaves it into pE2, 6K and E1 proteins. pE2 is further processed to mature E3 and E2 by host furin in trans-Golgi vesicle.</text>
</comment>
<comment type="PTM">
    <molecule>Capsid protein</molecule>
    <text evidence="3">Phosphorylated on serine and threonine residues.</text>
</comment>
<comment type="PTM">
    <molecule>Spike glycoprotein E2</molecule>
    <text evidence="1">Palmitoylated via thioester bonds. These palmitoylations may induce disruption of the C-terminus transmembrane. This would result in the reorientation of E2 C-terminus from lumenal to cytoplasmic side.</text>
</comment>
<comment type="PTM">
    <molecule>Spike glycoprotein E1</molecule>
    <text evidence="1">N-glycosylated.</text>
</comment>
<comment type="PTM">
    <molecule>Spike glycoprotein E2</molecule>
    <text evidence="1">N-glycosylated.</text>
</comment>
<comment type="PTM">
    <molecule>Assembly protein E3</molecule>
    <text evidence="1">N-glycosylated.</text>
</comment>
<comment type="PTM">
    <molecule>6K protein</molecule>
    <text evidence="1">Palmitoylated via thioester bonds.</text>
</comment>
<comment type="miscellaneous">
    <text evidence="17">Belongs to the New World alphaviruses that can cause fatal encephalitis.</text>
</comment>
<comment type="miscellaneous">
    <text evidence="8">Structural polyprotein: Translated from a subgenomic RNA synthesized during togavirus replication.</text>
</comment>
<organismHost>
    <name type="scientific">Aedes</name>
    <dbReference type="NCBI Taxonomy" id="7158"/>
</organismHost>
<organismHost>
    <name type="scientific">Homo sapiens</name>
    <name type="common">Human</name>
    <dbReference type="NCBI Taxonomy" id="9606"/>
</organismHost>
<organismHost>
    <name type="scientific">Passeriformes</name>
    <dbReference type="NCBI Taxonomy" id="9126"/>
</organismHost>
<sequence length="1239" mass="137432">MFPYPTLNYPPMAPINPMAYRDPNPPRQVAPFRPPLAAQIEDLRRSIANLTLKQRAPNPPAGPPAKRKKPAPSLSLETKKKRPPPPAKKQKRKPKPGKRQRMCMKLESDKTFPIMLNGQVNGYACVVGGRVFKPLHVEGRIDNEQLAAIKLKKASIYDLEYGDVPQCMKSDTLQYTSDKPPGFYNWHHGAVQYENNRFTVPRGVGGKGDSGRPILDNKGRVVAIVQGGVNEGSRTALSVVTWNQKGVTVKDTPEGSEPWSLATVMCVLANITFPCDQPPCMPCCYEKNPHETLTMLEQNYDSRAYDQLLDAAVKCNARRTRRDLDTHFTQYKLARPYIADCPNCGHSRCDSPIAIEEVRGDAHAGVIRIQTSAMFGLKRHGVDLAYMSFMNGKTQKSIKIDNLHVRTSAPCSLVSHHGYYILAQCPPGDTVTVGFHDGPNRHTCRLAHKVEFRPVGREKYRHPPEHGVELPCNRYTHKRADQGHYVEMHQPGLVGDHSLLSIHSAKVKITVPSGAQVKYYCKCPDVREGITSSDHTTTCTDVKQCRAYLIDNKKWVYNSGRLPRGEGDTFKGKLHVPFVPVKAKCIATLAPEPLVEHKHRTLILHLHPDHPTLLTTRSLGSDANPTRQWIERPTTVNFTVTGEGLEYTWGNHPPKRVWAQESGEGNPHGWPHVVVVYYYNRYPLTTIIGLCTCVAIIMVSCDHPCGSFSGLRNLCITPYKLAPNAQVPILLALLCCIKPTRADDTLQVLNYLWNNNQNFFWMQTLIPLAALIVCMRMLAALFCCGPAFLLVCGAWAAAYEHTAVMPNKVGIPYKALVERPGYAPVHLQIQLVNTRIIPSTNLEYITCKYKTKVPSPVVKCCGATQCTSKPHPDYQCQVFTGVYPFMWGGAYCFCDTENTQMSEAYVERSEECSIDHAKAYKVHTGTVQAMVNITYGSVTWRSADVYVNGETPAKIGDAKLIIGPLSSAWSPFDNKVVVYGHEVYNYDFPEYGTGKAGSFGDLQSRTSTSNDLYANTNLKLQRPQAGIVHTPFTQAPSGFERWKRDKGAPLNDVAPFGCSIALEPLRPENCAVGSIPISIDIPDAAFTRISETPTVSDLECKITECTYASDFGGIATLPTNPVKQETVQFIVHQVLQLLKRMTSPLLRAGSFTFHFSTANIHPAFKLQVCTSGITCKGDCKPPKDHIVDYPAQHTESFTSAISATAWSWLKVLVGGTSAFIVLGLIATAVVALVLFFHRH</sequence>
<organism>
    <name type="scientific">Eastern equine encephalitis virus</name>
    <name type="common">EEEV</name>
    <name type="synonym">Eastern equine encephalomyelitis virus</name>
    <dbReference type="NCBI Taxonomy" id="11021"/>
    <lineage>
        <taxon>Viruses</taxon>
        <taxon>Riboviria</taxon>
        <taxon>Orthornavirae</taxon>
        <taxon>Kitrinoviricota</taxon>
        <taxon>Alsuviricetes</taxon>
        <taxon>Martellivirales</taxon>
        <taxon>Togaviridae</taxon>
        <taxon>Alphavirus</taxon>
    </lineage>
</organism>
<proteinExistence type="evidence at protein level"/>
<protein>
    <recommendedName>
        <fullName>Structural polyprotein</fullName>
    </recommendedName>
    <alternativeName>
        <fullName>p130</fullName>
    </alternativeName>
    <component>
        <recommendedName>
            <fullName>Capsid protein</fullName>
            <ecNumber evidence="1">3.4.21.90</ecNumber>
        </recommendedName>
        <alternativeName>
            <fullName>Coat protein</fullName>
            <shortName>C</shortName>
        </alternativeName>
    </component>
    <component>
        <recommendedName>
            <fullName>Precursor of protein E3/E2</fullName>
        </recommendedName>
        <alternativeName>
            <fullName>p62</fullName>
        </alternativeName>
        <alternativeName>
            <fullName>pE2</fullName>
        </alternativeName>
    </component>
    <component>
        <recommendedName>
            <fullName>Assembly protein E3</fullName>
        </recommendedName>
    </component>
    <component>
        <recommendedName>
            <fullName>Spike glycoprotein E2</fullName>
        </recommendedName>
        <alternativeName>
            <fullName>E2 envelope glycoprotein</fullName>
        </alternativeName>
    </component>
    <component>
        <recommendedName>
            <fullName>6K protein</fullName>
        </recommendedName>
    </component>
    <component>
        <recommendedName>
            <fullName>Spike glycoprotein E1</fullName>
        </recommendedName>
        <alternativeName>
            <fullName>E1 envelope glycoprotein</fullName>
        </alternativeName>
    </component>
</protein>
<feature type="chain" id="PRO_0000041241" description="Capsid protein">
    <location>
        <begin position="1"/>
        <end position="259"/>
    </location>
</feature>
<feature type="chain" id="PRO_0000234316" description="Precursor of protein E3/E2">
    <location>
        <begin position="260"/>
        <end position="742"/>
    </location>
</feature>
<feature type="chain" id="PRO_0000041242" description="Assembly protein E3">
    <location>
        <begin position="260"/>
        <end position="322"/>
    </location>
</feature>
<feature type="chain" id="PRO_0000041243" description="Spike glycoprotein E2">
    <location>
        <begin position="323"/>
        <end position="742"/>
    </location>
</feature>
<feature type="chain" id="PRO_0000041244" description="6K protein">
    <location>
        <begin position="743"/>
        <end position="798"/>
    </location>
</feature>
<feature type="chain" id="PRO_0000041245" description="Spike glycoprotein E1">
    <location>
        <begin position="799"/>
        <end position="1239"/>
    </location>
</feature>
<feature type="topological domain" description="Extracellular" evidence="10">
    <location>
        <begin position="260"/>
        <end position="681"/>
    </location>
</feature>
<feature type="transmembrane region" description="Helical" evidence="10">
    <location>
        <begin position="682"/>
        <end position="702"/>
    </location>
</feature>
<feature type="topological domain" description="Cytoplasmic" evidence="10">
    <location>
        <begin position="703"/>
        <end position="742"/>
    </location>
</feature>
<feature type="topological domain" description="Extracellular" evidence="10">
    <location>
        <begin position="743"/>
        <end position="754"/>
    </location>
</feature>
<feature type="transmembrane region" description="Helical" evidence="10">
    <location>
        <begin position="755"/>
        <end position="775"/>
    </location>
</feature>
<feature type="topological domain" description="Cytoplasmic" evidence="10">
    <location>
        <position position="776"/>
    </location>
</feature>
<feature type="transmembrane region" description="Helical" evidence="10">
    <location>
        <begin position="777"/>
        <end position="797"/>
    </location>
</feature>
<feature type="topological domain" description="Extracellular" evidence="10">
    <location>
        <begin position="798"/>
        <end position="1215"/>
    </location>
</feature>
<feature type="transmembrane region" description="Helical" evidence="10">
    <location>
        <begin position="1216"/>
        <end position="1236"/>
    </location>
</feature>
<feature type="topological domain" description="Cytoplasmic" evidence="10">
    <location>
        <begin position="1237"/>
        <end position="1239"/>
    </location>
</feature>
<feature type="domain" description="Peptidase S3" evidence="11">
    <location>
        <begin position="110"/>
        <end position="259"/>
    </location>
</feature>
<feature type="region of interest" description="Disordered" evidence="12">
    <location>
        <begin position="1"/>
        <end position="101"/>
    </location>
</feature>
<feature type="region of interest" description="Necessary for nucleocapsid assembly and virus assembly" evidence="3">
    <location>
        <begin position="1"/>
        <end position="35"/>
    </location>
</feature>
<feature type="region of interest" description="Host transcription inhibition" evidence="3">
    <location>
        <begin position="36"/>
        <end position="69"/>
    </location>
</feature>
<feature type="region of interest" description="Binding to the viral RNA" evidence="4">
    <location>
        <begin position="81"/>
        <end position="111"/>
    </location>
</feature>
<feature type="region of interest" description="Ribosome-binding" evidence="4">
    <location>
        <begin position="96"/>
        <end position="110"/>
    </location>
</feature>
<feature type="region of interest" description="Interaction with spike glycoprotein E2" evidence="2">
    <location>
        <begin position="152"/>
        <end position="157"/>
    </location>
</feature>
<feature type="region of interest" description="Interaction with spike glycoprotein E2" evidence="2">
    <location>
        <begin position="244"/>
        <end position="248"/>
    </location>
</feature>
<feature type="region of interest" description="Functions as an uncleaved signal peptide for the precursor of protein E3/E2" evidence="1">
    <location>
        <begin position="260"/>
        <end position="271"/>
    </location>
</feature>
<feature type="region of interest" description="Interaction with the capsid protein" evidence="2">
    <location>
        <begin position="710"/>
        <end position="714"/>
    </location>
</feature>
<feature type="region of interest" description="Transient transmembrane before p62-6K protein processing" evidence="10">
    <location>
        <begin position="714"/>
        <end position="734"/>
    </location>
</feature>
<feature type="region of interest" description="E1 fusion peptide loop" evidence="14">
    <location>
        <begin position="882"/>
        <end position="899"/>
    </location>
</feature>
<feature type="short sequence motif" description="Supraphysiological nuclear export signal" evidence="3">
    <location>
        <begin position="43"/>
        <end position="50"/>
    </location>
</feature>
<feature type="short sequence motif" description="Nuclear localization signal" evidence="3">
    <location>
        <begin position="66"/>
        <end position="69"/>
    </location>
</feature>
<feature type="compositionally biased region" description="Pro residues" evidence="12">
    <location>
        <begin position="23"/>
        <end position="34"/>
    </location>
</feature>
<feature type="compositionally biased region" description="Basic residues" evidence="12">
    <location>
        <begin position="79"/>
        <end position="101"/>
    </location>
</feature>
<feature type="active site" description="Charge relay system" evidence="11">
    <location>
        <position position="136"/>
    </location>
</feature>
<feature type="active site" description="Charge relay system" evidence="11">
    <location>
        <position position="158"/>
    </location>
</feature>
<feature type="active site" description="Charge relay system" evidence="11">
    <location>
        <position position="210"/>
    </location>
</feature>
<feature type="site" description="Involved in dimerization of the capsid protein" evidence="8">
    <location>
        <position position="184"/>
    </location>
</feature>
<feature type="site" description="Involved in dimerization of the capsid protein" evidence="8">
    <location>
        <position position="217"/>
    </location>
</feature>
<feature type="site" description="Cleavage; by autolysis" evidence="1">
    <location>
        <begin position="259"/>
        <end position="260"/>
    </location>
</feature>
<feature type="site" description="Cleavage; by host furin" evidence="1">
    <location>
        <begin position="322"/>
        <end position="323"/>
    </location>
</feature>
<feature type="site" description="Interaction with host receptor VLDLR" evidence="16">
    <location>
        <position position="477"/>
    </location>
</feature>
<feature type="site" description="Interaction with host receptor VLDLR" evidence="16">
    <location>
        <position position="478"/>
    </location>
</feature>
<feature type="site" description="Interaction with host receptor VLDLR" evidence="16">
    <location>
        <position position="479"/>
    </location>
</feature>
<feature type="site" description="Interaction with host receptor VLDLR" evidence="16">
    <location>
        <position position="553"/>
    </location>
</feature>
<feature type="site" description="Interaction with host receptor VLDLR" evidence="16">
    <location>
        <position position="554"/>
    </location>
</feature>
<feature type="site" description="Cleavage; by host signal peptidase" evidence="1">
    <location>
        <begin position="742"/>
        <end position="743"/>
    </location>
</feature>
<feature type="site" description="Cleavage; by host signal peptidase" evidence="1">
    <location>
        <begin position="798"/>
        <end position="799"/>
    </location>
</feature>
<feature type="modified residue" description="Phosphoserine" evidence="3">
    <location>
        <position position="108"/>
    </location>
</feature>
<feature type="modified residue" description="Phosphothreonine" evidence="3">
    <location>
        <position position="111"/>
    </location>
</feature>
<feature type="lipid moiety-binding region" description="S-palmitoyl cysteine; by host" evidence="10">
    <location>
        <position position="705"/>
    </location>
</feature>
<feature type="lipid moiety-binding region" description="S-palmitoyl cysteine; by host" evidence="2">
    <location>
        <position position="715"/>
    </location>
</feature>
<feature type="lipid moiety-binding region" description="S-palmitoyl cysteine; by host" evidence="7">
    <location>
        <position position="735"/>
    </location>
</feature>
<feature type="lipid moiety-binding region" description="S-palmitoyl cysteine; by host" evidence="7">
    <location>
        <position position="736"/>
    </location>
</feature>
<feature type="glycosylation site" description="N-linked (GlcNAc...) asparagine; by host" evidence="10">
    <location>
        <position position="49"/>
    </location>
</feature>
<feature type="glycosylation site" description="N-linked (GlcNAc...) asparagine; by host" evidence="10">
    <location>
        <position position="270"/>
    </location>
</feature>
<feature type="glycosylation site" description="N-linked (GlcNAc...) asparagine; by host" evidence="10">
    <location>
        <position position="637"/>
    </location>
</feature>
<feature type="glycosylation site" description="N-linked (GlcNAc...) asparagine; by host" evidence="10">
    <location>
        <position position="932"/>
    </location>
</feature>
<feature type="glycosylation site" description="N-linked (GlcNAc...) asparagine; by host" evidence="7">
    <location>
        <position position="1069"/>
    </location>
</feature>
<feature type="disulfide bond" evidence="22 23">
    <location>
        <begin position="266"/>
        <end position="275"/>
    </location>
</feature>
<feature type="disulfide bond" evidence="22 23">
    <location>
        <begin position="280"/>
        <end position="284"/>
    </location>
</feature>
<feature type="disulfide bond" evidence="22 23">
    <location>
        <begin position="283"/>
        <end position="315"/>
    </location>
</feature>
<feature type="disulfide bond" evidence="21 22 23 24 25 26">
    <location>
        <begin position="341"/>
        <end position="444"/>
    </location>
</feature>
<feature type="disulfide bond" evidence="21 22 23 24 25 26">
    <location>
        <begin position="344"/>
        <end position="349"/>
    </location>
</feature>
<feature type="disulfide bond" evidence="21 22 23 24 25 26">
    <location>
        <begin position="411"/>
        <end position="425"/>
    </location>
</feature>
<feature type="disulfide bond" evidence="21 22 23 24 25 26">
    <location>
        <begin position="472"/>
        <end position="585"/>
    </location>
</feature>
<feature type="disulfide bond" evidence="21 22 23 24 25 26">
    <location>
        <begin position="521"/>
        <end position="545"/>
    </location>
</feature>
<feature type="disulfide bond" evidence="22 23 24 25 26">
    <location>
        <begin position="523"/>
        <end position="539"/>
    </location>
</feature>
<feature type="disulfide bond" evidence="22 24 25 26">
    <location>
        <begin position="715"/>
        <end position="736"/>
    </location>
</feature>
<feature type="disulfide bond" evidence="19 20 21 22 23 24 25 26">
    <location>
        <begin position="847"/>
        <end position="912"/>
    </location>
</feature>
<feature type="disulfide bond" evidence="21 22 23 24 25 26">
    <location>
        <begin position="860"/>
        <end position="892"/>
    </location>
</feature>
<feature type="disulfide bond" evidence="21 22 23 24 25 26">
    <location>
        <begin position="861"/>
        <end position="894"/>
    </location>
</feature>
<feature type="disulfide bond" evidence="19 20 21 22 23 24 25 26">
    <location>
        <begin position="866"/>
        <end position="876"/>
    </location>
</feature>
<feature type="disulfide bond" evidence="19 20 21 22 23 24 25 26">
    <location>
        <begin position="1058"/>
        <end position="1070"/>
    </location>
</feature>
<feature type="disulfide bond" evidence="19 20 21 22 23 24 25 26">
    <location>
        <begin position="1100"/>
        <end position="1175"/>
    </location>
</feature>
<feature type="disulfide bond" evidence="22 23 24 25 26">
    <location>
        <begin position="1105"/>
        <end position="1179"/>
    </location>
</feature>
<feature type="sequence variant" description="In strain: PE6 vaccine.">
    <original>QVA</original>
    <variation>RRWR</variation>
    <location>
        <begin position="28"/>
        <end position="30"/>
    </location>
</feature>
<feature type="sequence variant" description="In strain: PE6 vaccine.">
    <original>N</original>
    <variation>S</variation>
    <location>
        <position position="49"/>
    </location>
</feature>
<feature type="sequence variant" description="In strain: PE6 vaccine.">
    <original>SLSLET</original>
    <variation>KPKPAQA</variation>
    <location>
        <begin position="73"/>
        <end position="78"/>
    </location>
</feature>
<feature type="sequence variant" description="In strain: PE6 vaccine.">
    <original>Q</original>
    <variation>L</variation>
    <location>
        <position position="226"/>
    </location>
</feature>
<feature type="sequence variant" description="In strain: PE6 vaccine.">
    <original>RH</original>
    <variation>TD</variation>
    <location>
        <begin position="379"/>
        <end position="380"/>
    </location>
</feature>
<feature type="sequence variant" description="In strain: PE6 vaccine.">
    <original>RL</original>
    <variation>TV</variation>
    <location>
        <begin position="445"/>
        <end position="446"/>
    </location>
</feature>
<feature type="sequence variant" description="In strain: PE6 vaccine.">
    <original>G</original>
    <variation>A</variation>
    <location>
        <position position="495"/>
    </location>
</feature>
<feature type="sequence variant" description="In strain: PE6 vaccine.">
    <original>E</original>
    <variation>K</variation>
    <location>
        <position position="528"/>
    </location>
</feature>
<feature type="sequence variant" description="In strain: PE6 vaccine.">
    <original>V</original>
    <variation>E</variation>
    <location>
        <position position="673"/>
    </location>
</feature>
<feature type="sequence variant" description="In strain: PE6 vaccine.">
    <original>DHPCGSFSGL</original>
    <variation>VTSVWLLCRT</variation>
    <location>
        <begin position="702"/>
        <end position="711"/>
    </location>
</feature>
<feature type="sequence variant" description="In strain: PE6 vaccine.">
    <original>AA</original>
    <variation>RC</variation>
    <location>
        <begin position="779"/>
        <end position="780"/>
    </location>
</feature>
<feature type="sequence variant" description="In strain: PE6 vaccine.">
    <original>W</original>
    <variation>LG</variation>
    <location>
        <position position="795"/>
    </location>
</feature>
<feature type="sequence variant" description="In strain: PE6 vaccine.">
    <original>T</original>
    <variation>S</variation>
    <location>
        <position position="880"/>
    </location>
</feature>
<feature type="sequence variant" description="In strain: PE6 vaccine.">
    <original>T</original>
    <variation>S</variation>
    <location>
        <position position="939"/>
    </location>
</feature>
<feature type="sequence variant" description="In strain: PE6 vaccine.">
    <original>A</original>
    <variation>V</variation>
    <location>
        <position position="1035"/>
    </location>
</feature>
<feature type="sequence variant" description="In strain: PE6 vaccine.">
    <original>R</original>
    <variation>K</variation>
    <location>
        <position position="1044"/>
    </location>
</feature>
<feature type="sequence variant" description="In strain: PE6 vaccine.">
    <original>P</original>
    <variation>A</variation>
    <location>
        <position position="1067"/>
    </location>
</feature>
<feature type="sequence variant" description="In strain: PE6 vaccine.">
    <original>S</original>
    <variation>F</variation>
    <location>
        <position position="1109"/>
    </location>
</feature>
<feature type="sequence variant" description="In strain: PE6 vaccine.">
    <original>LPTNPVKQETVQFIVHQVLQLLKRMTSPLLRA</original>
    <variation>VAYKSSKAGNCPIHSPSGVAVIKENDVTLAES</variation>
    <location>
        <begin position="1117"/>
        <end position="1148"/>
    </location>
</feature>
<feature type="sequence variant" description="In strain: PE6 vaccine.">
    <original>GI</original>
    <variation>AV</variation>
    <location>
        <begin position="1172"/>
        <end position="1173"/>
    </location>
</feature>
<feature type="sequence variant" description="In strain: PE6 vaccine.">
    <original>L</original>
    <variation>I</variation>
    <location>
        <position position="1209"/>
    </location>
</feature>
<feature type="mutagenesis site" description="Complete loss of interaction of EEEV strain FL91-469 with host receptors LRP8/APOER2 and VLDLR. No effect on EEEV-PE6 strain." evidence="16">
    <original>K</original>
    <variation>A</variation>
    <location>
        <position position="478"/>
    </location>
</feature>
<feature type="mutagenesis site" description="Partial loss of interaction of EEEV strain FL91-469 with host receptor VLDLR but not with host receptor LRP8/APOER2. No effect on the interaction of EEEV-PE6 strain with host receptors VLDLR or LRP8/APOER2." evidence="16">
    <original>KK</original>
    <variation>AA</variation>
    <location>
        <begin position="553"/>
        <end position="554"/>
    </location>
</feature>
<reference key="1">
    <citation type="journal article" date="1987" name="J. Gen. Virol.">
        <title>Nucleotide sequence of the genome region encoding the 26S mRNA of eastern equine encephalomyelitis virus and the deduced amino acid sequence of the viral structural proteins.</title>
        <authorList>
            <person name="Chang G.-J.J."/>
            <person name="Trent D.W."/>
        </authorList>
    </citation>
    <scope>NUCLEOTIDE SEQUENCE [MRNA]</scope>
    <source>
        <strain>82V-2137</strain>
    </source>
</reference>
<reference key="2">
    <citation type="submission" date="1994-11" db="EMBL/GenBank/DDBJ databases">
        <title>Structural gene sequences of the PE6 vaccine strain of Eastern equine encephalitis virus.</title>
        <authorList>
            <person name="Parker M.D."/>
            <person name="Schoepp R.J."/>
            <person name="Glass P.J."/>
            <person name="Smith J.F."/>
        </authorList>
    </citation>
    <scope>NUCLEOTIDE SEQUENCE [GENOMIC RNA]</scope>
    <source>
        <strain>PE6 vaccine</strain>
    </source>
</reference>
<reference key="3">
    <citation type="journal article" date="2022" name="Nature">
        <title>VLDLR and ApoER2 are receptors for multiple alphaviruses.</title>
        <authorList>
            <person name="Clark L.E."/>
            <person name="Clark S.A."/>
            <person name="Lin C."/>
            <person name="Liu J."/>
            <person name="Coscia A."/>
            <person name="Nabel K.G."/>
            <person name="Yang P."/>
            <person name="Neel D.V."/>
            <person name="Lee H."/>
            <person name="Brusic V."/>
            <person name="Stryapunina I."/>
            <person name="Plante K.S."/>
            <person name="Ahmed A.A."/>
            <person name="Catteruccia F."/>
            <person name="Young-Pearse T.L."/>
            <person name="Chiu I.M."/>
            <person name="Llopis P.M."/>
            <person name="Weaver S.C."/>
            <person name="Abraham J."/>
        </authorList>
    </citation>
    <scope>FUNCTION (SPIKE GLYCOPROTEIN E1)</scope>
    <scope>INTERACTION WITH HOST VLDLR AND LRP8/APOER2 (SPIKE GLYCOPROTEIN E1)</scope>
    <scope>FUNCTION (SPIKE GLYCOPROTEIN E2)</scope>
    <scope>INTERACTION WITH HOST VLDLR AND LRP8/APOER2 (SPIKE GLYCOPROTEIN E2)</scope>
    <source>
        <strain>FL-93-939</strain>
    </source>
</reference>
<reference evidence="19 20" key="4">
    <citation type="journal article" date="2020" name="Cell">
        <title>Human Antibodies Protect against Aerosolized Eastern Equine Encephalitis Virus Infection.</title>
        <authorList>
            <person name="Williamson L.E."/>
            <person name="Gilliland T."/>
            <person name="Yadav P.K."/>
            <person name="Binshtein E."/>
            <person name="Bombardi R."/>
            <person name="Kose N."/>
            <person name="Nargi R.S."/>
            <person name="Sutton R.E."/>
            <person name="Durie C.L."/>
            <person name="Armstrong E."/>
            <person name="Carnahan R.H."/>
            <person name="Walker L.M."/>
            <person name="Kim A.S."/>
            <person name="Fox J.M."/>
            <person name="Diamond M.S."/>
            <person name="Ohi M.D."/>
            <person name="Klimstra W.B."/>
            <person name="Crowe J.E."/>
        </authorList>
    </citation>
    <scope>STRUCTURE BY ELECTRON MICROSCOPY (4.20 ANGSTROMS) OF 1-261; 325-744 AND 802-1239 IN COMPLEX WITH ANTIBODY FAB EEEV-143</scope>
    <scope>DISULFIDE BONDS</scope>
    <scope>SUBUNIT (SPIKE GLYCOPROTEIN E2)</scope>
    <source>
        <strain>PE6 vaccine</strain>
    </source>
</reference>
<reference evidence="21" key="5">
    <citation type="journal article" date="2023" name="Cell">
        <title>Vaccine elicitation and structural basis for antibody protection against alphaviruses.</title>
        <authorList>
            <person name="Sutton M.S."/>
            <person name="Pletnev S."/>
            <person name="Callahan V."/>
            <person name="Ko S."/>
            <person name="Tsybovsky Y."/>
            <person name="Bylund T."/>
            <person name="Casner R.G."/>
            <person name="Cerutti G."/>
            <person name="Gardner C.L."/>
            <person name="Guirguis V."/>
            <person name="Verardi R."/>
            <person name="Zhang B."/>
            <person name="Ambrozak D."/>
            <person name="Beddall M."/>
            <person name="Lei H."/>
            <person name="Yang E.S."/>
            <person name="Liu T."/>
            <person name="Henry A.R."/>
            <person name="Rawi R."/>
            <person name="Schon A."/>
            <person name="Schramm C.A."/>
            <person name="Shen C.H."/>
            <person name="Shi W."/>
            <person name="Stephens T."/>
            <person name="Yang Y."/>
            <person name="Florez M.B."/>
            <person name="Ledgerwood J.E."/>
            <person name="Burke C.W."/>
            <person name="Shapiro L."/>
            <person name="Fox J.M."/>
            <person name="Kwong P.D."/>
            <person name="Roederer M."/>
        </authorList>
    </citation>
    <scope>STRUCTURE BY ELECTRON MICROSCOPY (3.50 ANGSTROMS) OF 325-744 AND 802-1239 IN COMPLEX WITH ANTIBODY SKE26 FAB</scope>
    <scope>DISULFIDE BONDS</scope>
    <source>
        <strain>PE6 vaccine</strain>
    </source>
</reference>
<reference evidence="24 25" key="6">
    <citation type="journal article" date="2024" name="Cell">
        <title>Structural and functional basis of VLDLR usage by Eastern equine encephalitis virus.</title>
        <authorList>
            <person name="Adams L.J."/>
            <person name="Raju S."/>
            <person name="Ma H."/>
            <person name="Gilliland T."/>
            <person name="Reed D.S."/>
            <person name="Klimstra W.B."/>
            <person name="Fremont D.H."/>
            <person name="Diamond M.S."/>
        </authorList>
    </citation>
    <scope>STRUCTURE BY ELECTRON MICROSCOPY (2.86 ANGSTROMS) OF 325-738 AND 802-1239 IN COMPLEX WITH HOST RECEPTOR VLDLR</scope>
    <scope>DISULFIDE BONDS</scope>
    <scope>INTERACTION WITH HOST RECEPTOR VLDLR (SPIKE GLYCOPROTEIN E2)</scope>
    <scope>FUNCTION (SPIKE GLYCOPROTEIN E2)</scope>
    <scope>FUNCTION (CAPSID PROTEIN)</scope>
    <source>
        <strain>PE6 vaccine</strain>
    </source>
</reference>
<reference evidence="22 23" key="7">
    <citation type="journal article" date="2024" name="Nat. Commun.">
        <title>Structural basis for VLDLR recognition by eastern equine encephalitis virus.</title>
        <authorList>
            <person name="Yang P."/>
            <person name="Li W."/>
            <person name="Fan X."/>
            <person name="Pan J."/>
            <person name="Mann C.J."/>
            <person name="Varnum H."/>
            <person name="Clark L.E."/>
            <person name="Clark S.A."/>
            <person name="Coscia A."/>
            <person name="Basu H."/>
            <person name="Smith K.N."/>
            <person name="Brusic V."/>
            <person name="Abraham J."/>
        </authorList>
    </citation>
    <scope>STRUCTURE BY ELECTRON MICROSCOPY (3.00 ANGSTROMS) OF 1-261; 260-322; 325-742 AND 802-1239 IN COMPLEX WITH HOST RECEPTOR VLDLR</scope>
    <scope>DISULFIDE BONDS</scope>
    <scope>INTERACTION WITH HOST RECEPTOR VLDLR (SPIKE GLYCOPROTEIN E2)</scope>
    <scope>MUTAGENESIS OF LYS-478 AND 553-LYS-LYS-554</scope>
    <scope>INTERACTION WITH HOST RECEPTOR LRP8/APOER2 (SPIKE GLYCOPROTEIN E2)</scope>
    <scope>FUNCTION (SPIKE GLYCOPROTEIN E2)</scope>
    <source>
        <strain>FL91-469</strain>
        <strain>PE6 vaccine</strain>
    </source>
</reference>
<keyword id="KW-0002">3D-structure</keyword>
<keyword id="KW-0167">Capsid protein</keyword>
<keyword id="KW-0165">Cleavage on pair of basic residues</keyword>
<keyword id="KW-1015">Disulfide bond</keyword>
<keyword id="KW-1262">Eukaryotic host gene expression shutoff by virus</keyword>
<keyword id="KW-1191">Eukaryotic host transcription shutoff by virus</keyword>
<keyword id="KW-1170">Fusion of virus membrane with host endosomal membrane</keyword>
<keyword id="KW-1168">Fusion of virus membrane with host membrane</keyword>
<keyword id="KW-0325">Glycoprotein</keyword>
<keyword id="KW-1032">Host cell membrane</keyword>
<keyword id="KW-1035">Host cytoplasm</keyword>
<keyword id="KW-1038">Host endoplasmic reticulum</keyword>
<keyword id="KW-1190">Host gene expression shutoff by virus</keyword>
<keyword id="KW-1040">Host Golgi apparatus</keyword>
<keyword id="KW-1043">Host membrane</keyword>
<keyword id="KW-1048">Host nucleus</keyword>
<keyword id="KW-0945">Host-virus interaction</keyword>
<keyword id="KW-0378">Hydrolase</keyword>
<keyword id="KW-0407">Ion channel</keyword>
<keyword id="KW-0406">Ion transport</keyword>
<keyword id="KW-0449">Lipoprotein</keyword>
<keyword id="KW-0472">Membrane</keyword>
<keyword id="KW-0564">Palmitate</keyword>
<keyword id="KW-0597">Phosphoprotein</keyword>
<keyword id="KW-0645">Protease</keyword>
<keyword id="KW-0694">RNA-binding</keyword>
<keyword id="KW-0720">Serine protease</keyword>
<keyword id="KW-1144">T=4 icosahedral capsid protein</keyword>
<keyword id="KW-0812">Transmembrane</keyword>
<keyword id="KW-1133">Transmembrane helix</keyword>
<keyword id="KW-0813">Transport</keyword>
<keyword id="KW-1161">Viral attachment to host cell</keyword>
<keyword id="KW-1234">Viral attachment to host entry receptor</keyword>
<keyword id="KW-1182">Viral ion channel</keyword>
<keyword id="KW-1162">Viral penetration into host cytoplasm</keyword>
<keyword id="KW-0946">Virion</keyword>
<keyword id="KW-1160">Virus entry into host cell</keyword>
<dbReference type="EC" id="3.4.21.90" evidence="1"/>
<dbReference type="EMBL" id="X05816">
    <property type="protein sequence ID" value="CAA29261.1"/>
    <property type="molecule type" value="mRNA"/>
</dbReference>
<dbReference type="EMBL" id="L37662">
    <property type="protein sequence ID" value="AAA67908.1"/>
    <property type="molecule type" value="Genomic_RNA"/>
</dbReference>
<dbReference type="PIR" id="A26816">
    <property type="entry name" value="VHWVEE"/>
</dbReference>
<dbReference type="PIR" id="D37264">
    <property type="entry name" value="D37264"/>
</dbReference>
<dbReference type="PDB" id="6XO4">
    <property type="method" value="EM"/>
    <property type="resolution" value="4.20 A"/>
    <property type="chains" value="A/D/G/J=802-1239"/>
</dbReference>
<dbReference type="PDB" id="6XOB">
    <property type="method" value="EM"/>
    <property type="resolution" value="8.50 A"/>
    <property type="chains" value="A/D/G/J=802-1239"/>
</dbReference>
<dbReference type="PDB" id="8DWO">
    <property type="method" value="EM"/>
    <property type="resolution" value="3.50 A"/>
    <property type="chains" value="A/F/J=802-1239, B/G/K=325-744"/>
</dbReference>
<dbReference type="PDB" id="8UA4">
    <property type="method" value="EM"/>
    <property type="resolution" value="3.58 A"/>
    <property type="chains" value="A/D/G/J=802-1239, B/E/H/K=325-744, C/F/I/L=1-261, M/N/O/P=260-322"/>
</dbReference>
<dbReference type="PDB" id="8UA9">
    <property type="method" value="EM"/>
    <property type="resolution" value="3.00 A"/>
    <property type="chains" value="A/E/I/M=802-1239, B/F/J/N=325-742, C/G/K/O=263-316, D/H/L/P=1-261"/>
</dbReference>
<dbReference type="PDB" id="8UFA">
    <property type="method" value="EM"/>
    <property type="resolution" value="2.86 A"/>
    <property type="chains" value="A/D/G/J=802-1239, B/E/H/K=325-738, C/F/I/L=111-261"/>
</dbReference>
<dbReference type="PDB" id="8UFB">
    <property type="method" value="EM"/>
    <property type="resolution" value="3.89 A"/>
    <property type="chains" value="A/D/G/J=802-1239, B/E/H/K=325-738"/>
</dbReference>
<dbReference type="PDB" id="8UFC">
    <property type="method" value="EM"/>
    <property type="resolution" value="3.09 A"/>
    <property type="chains" value="A/D/G/J=802-1239, B/E/H/K=325-738"/>
</dbReference>
<dbReference type="PDBsum" id="6XO4"/>
<dbReference type="PDBsum" id="6XOB"/>
<dbReference type="PDBsum" id="8DWO"/>
<dbReference type="PDBsum" id="8UA4"/>
<dbReference type="PDBsum" id="8UA9"/>
<dbReference type="PDBsum" id="8UFA"/>
<dbReference type="PDBsum" id="8UFB"/>
<dbReference type="PDBsum" id="8UFC"/>
<dbReference type="EMDB" id="EMD-42050"/>
<dbReference type="EMDB" id="EMD-42055"/>
<dbReference type="SMR" id="P08768"/>
<dbReference type="MEROPS" id="S03.001"/>
<dbReference type="GO" id="GO:0030430">
    <property type="term" value="C:host cell cytoplasm"/>
    <property type="evidence" value="ECO:0007669"/>
    <property type="project" value="UniProtKB-SubCell"/>
</dbReference>
<dbReference type="GO" id="GO:0042025">
    <property type="term" value="C:host cell nucleus"/>
    <property type="evidence" value="ECO:0007669"/>
    <property type="project" value="UniProtKB-SubCell"/>
</dbReference>
<dbReference type="GO" id="GO:0020002">
    <property type="term" value="C:host cell plasma membrane"/>
    <property type="evidence" value="ECO:0007669"/>
    <property type="project" value="UniProtKB-SubCell"/>
</dbReference>
<dbReference type="GO" id="GO:0016020">
    <property type="term" value="C:membrane"/>
    <property type="evidence" value="ECO:0007669"/>
    <property type="project" value="UniProtKB-KW"/>
</dbReference>
<dbReference type="GO" id="GO:0039619">
    <property type="term" value="C:T=4 icosahedral viral capsid"/>
    <property type="evidence" value="ECO:0007669"/>
    <property type="project" value="UniProtKB-KW"/>
</dbReference>
<dbReference type="GO" id="GO:0055036">
    <property type="term" value="C:virion membrane"/>
    <property type="evidence" value="ECO:0007669"/>
    <property type="project" value="UniProtKB-SubCell"/>
</dbReference>
<dbReference type="GO" id="GO:0003723">
    <property type="term" value="F:RNA binding"/>
    <property type="evidence" value="ECO:0007669"/>
    <property type="project" value="UniProtKB-KW"/>
</dbReference>
<dbReference type="GO" id="GO:0004252">
    <property type="term" value="F:serine-type endopeptidase activity"/>
    <property type="evidence" value="ECO:0007669"/>
    <property type="project" value="InterPro"/>
</dbReference>
<dbReference type="GO" id="GO:0005198">
    <property type="term" value="F:structural molecule activity"/>
    <property type="evidence" value="ECO:0007669"/>
    <property type="project" value="InterPro"/>
</dbReference>
<dbReference type="GO" id="GO:0039654">
    <property type="term" value="P:fusion of virus membrane with host endosome membrane"/>
    <property type="evidence" value="ECO:0007669"/>
    <property type="project" value="UniProtKB-KW"/>
</dbReference>
<dbReference type="GO" id="GO:0006508">
    <property type="term" value="P:proteolysis"/>
    <property type="evidence" value="ECO:0007669"/>
    <property type="project" value="UniProtKB-KW"/>
</dbReference>
<dbReference type="GO" id="GO:0046718">
    <property type="term" value="P:symbiont entry into host cell"/>
    <property type="evidence" value="ECO:0007669"/>
    <property type="project" value="UniProtKB-KW"/>
</dbReference>
<dbReference type="GO" id="GO:0039657">
    <property type="term" value="P:symbiont-mediated suppression of host gene expression"/>
    <property type="evidence" value="ECO:0007669"/>
    <property type="project" value="UniProtKB-KW"/>
</dbReference>
<dbReference type="GO" id="GO:0039722">
    <property type="term" value="P:symbiont-mediated suppression of host toll-like receptor signaling pathway"/>
    <property type="evidence" value="ECO:0000250"/>
    <property type="project" value="UniProtKB"/>
</dbReference>
<dbReference type="GO" id="GO:0019062">
    <property type="term" value="P:virion attachment to host cell"/>
    <property type="evidence" value="ECO:0007669"/>
    <property type="project" value="UniProtKB-KW"/>
</dbReference>
<dbReference type="FunFam" id="1.10.287.2230:FF:000001">
    <property type="entry name" value="Structural polyprotein"/>
    <property type="match status" value="1"/>
</dbReference>
<dbReference type="FunFam" id="2.40.10.10:FF:000075">
    <property type="entry name" value="Structural polyprotein"/>
    <property type="match status" value="1"/>
</dbReference>
<dbReference type="FunFam" id="2.40.10.10:FF:000076">
    <property type="entry name" value="Structural polyprotein"/>
    <property type="match status" value="1"/>
</dbReference>
<dbReference type="FunFam" id="2.60.40.2400:FF:000001">
    <property type="entry name" value="Structural polyprotein"/>
    <property type="match status" value="1"/>
</dbReference>
<dbReference type="FunFam" id="2.60.98.10:FF:000002">
    <property type="entry name" value="Structural polyprotein"/>
    <property type="match status" value="1"/>
</dbReference>
<dbReference type="FunFam" id="2.60.98.10:FF:000003">
    <property type="entry name" value="Structural polyprotein"/>
    <property type="match status" value="1"/>
</dbReference>
<dbReference type="Gene3D" id="1.10.287.2230">
    <property type="match status" value="1"/>
</dbReference>
<dbReference type="Gene3D" id="2.60.40.350">
    <property type="match status" value="1"/>
</dbReference>
<dbReference type="Gene3D" id="2.60.40.3200">
    <property type="entry name" value="Alphavirus E2 glycoprotein, A domain"/>
    <property type="match status" value="1"/>
</dbReference>
<dbReference type="Gene3D" id="2.60.40.4310">
    <property type="entry name" value="Alphavirus E2 glycoprotein, domain B"/>
    <property type="match status" value="1"/>
</dbReference>
<dbReference type="Gene3D" id="2.60.40.2400">
    <property type="entry name" value="Alphavirus E2 glycoprotein, domain C"/>
    <property type="match status" value="1"/>
</dbReference>
<dbReference type="Gene3D" id="2.60.98.10">
    <property type="entry name" value="Tick-borne Encephalitis virus Glycoprotein, domain 1"/>
    <property type="match status" value="3"/>
</dbReference>
<dbReference type="Gene3D" id="2.40.10.10">
    <property type="entry name" value="Trypsin-like serine proteases"/>
    <property type="match status" value="2"/>
</dbReference>
<dbReference type="InterPro" id="IPR002548">
    <property type="entry name" value="Alpha_E1_glycop"/>
</dbReference>
<dbReference type="InterPro" id="IPR000936">
    <property type="entry name" value="Alpha_E2_glycop"/>
</dbReference>
<dbReference type="InterPro" id="IPR002533">
    <property type="entry name" value="Alpha_E3_glycop"/>
</dbReference>
<dbReference type="InterPro" id="IPR042304">
    <property type="entry name" value="Alphavir_E2_A"/>
</dbReference>
<dbReference type="InterPro" id="IPR042305">
    <property type="entry name" value="Alphavir_E2_B"/>
</dbReference>
<dbReference type="InterPro" id="IPR042306">
    <property type="entry name" value="Alphavir_E2_C"/>
</dbReference>
<dbReference type="InterPro" id="IPR000336">
    <property type="entry name" value="Flavivir/Alphavir_Ig-like_sf"/>
</dbReference>
<dbReference type="InterPro" id="IPR036253">
    <property type="entry name" value="Glycoprot_cen/dimer_sf"/>
</dbReference>
<dbReference type="InterPro" id="IPR038055">
    <property type="entry name" value="Glycoprot_E_dimer_dom"/>
</dbReference>
<dbReference type="InterPro" id="IPR014756">
    <property type="entry name" value="Ig_E-set"/>
</dbReference>
<dbReference type="InterPro" id="IPR009003">
    <property type="entry name" value="Peptidase_S1_PA"/>
</dbReference>
<dbReference type="InterPro" id="IPR043504">
    <property type="entry name" value="Peptidase_S1_PA_chymotrypsin"/>
</dbReference>
<dbReference type="InterPro" id="IPR000930">
    <property type="entry name" value="Peptidase_S3"/>
</dbReference>
<dbReference type="Pfam" id="PF01589">
    <property type="entry name" value="Alpha_E1_glycop"/>
    <property type="match status" value="1"/>
</dbReference>
<dbReference type="Pfam" id="PF00943">
    <property type="entry name" value="Alpha_E2_glycop"/>
    <property type="match status" value="1"/>
</dbReference>
<dbReference type="Pfam" id="PF01563">
    <property type="entry name" value="Alpha_E3_glycop"/>
    <property type="match status" value="1"/>
</dbReference>
<dbReference type="Pfam" id="PF00944">
    <property type="entry name" value="Peptidase_S3"/>
    <property type="match status" value="1"/>
</dbReference>
<dbReference type="PRINTS" id="PR00798">
    <property type="entry name" value="TOGAVIRIN"/>
</dbReference>
<dbReference type="SUPFAM" id="SSF81296">
    <property type="entry name" value="E set domains"/>
    <property type="match status" value="1"/>
</dbReference>
<dbReference type="SUPFAM" id="SSF50494">
    <property type="entry name" value="Trypsin-like serine proteases"/>
    <property type="match status" value="1"/>
</dbReference>
<dbReference type="SUPFAM" id="SSF56983">
    <property type="entry name" value="Viral glycoprotein, central and dimerisation domains"/>
    <property type="match status" value="1"/>
</dbReference>
<dbReference type="PROSITE" id="PS51690">
    <property type="entry name" value="ALPHAVIRUS_CP"/>
    <property type="match status" value="1"/>
</dbReference>
<accession>P08768</accession>
<accession>Q88678</accession>
<evidence type="ECO:0000250" key="1">
    <source>
        <dbReference type="UniProtKB" id="P03315"/>
    </source>
</evidence>
<evidence type="ECO:0000250" key="2">
    <source>
        <dbReference type="UniProtKB" id="P03316"/>
    </source>
</evidence>
<evidence type="ECO:0000250" key="3">
    <source>
        <dbReference type="UniProtKB" id="P09592"/>
    </source>
</evidence>
<evidence type="ECO:0000250" key="4">
    <source>
        <dbReference type="UniProtKB" id="P27284"/>
    </source>
</evidence>
<evidence type="ECO:0000250" key="5">
    <source>
        <dbReference type="UniProtKB" id="P36329"/>
    </source>
</evidence>
<evidence type="ECO:0000250" key="6">
    <source>
        <dbReference type="UniProtKB" id="Q5XXP3"/>
    </source>
</evidence>
<evidence type="ECO:0000250" key="7">
    <source>
        <dbReference type="UniProtKB" id="Q5Y388"/>
    </source>
</evidence>
<evidence type="ECO:0000250" key="8">
    <source>
        <dbReference type="UniProtKB" id="Q86925"/>
    </source>
</evidence>
<evidence type="ECO:0000250" key="9">
    <source>
        <dbReference type="UniProtKB" id="Q8JUX5"/>
    </source>
</evidence>
<evidence type="ECO:0000255" key="10"/>
<evidence type="ECO:0000255" key="11">
    <source>
        <dbReference type="PROSITE-ProRule" id="PRU01027"/>
    </source>
</evidence>
<evidence type="ECO:0000256" key="12">
    <source>
        <dbReference type="SAM" id="MobiDB-lite"/>
    </source>
</evidence>
<evidence type="ECO:0000269" key="13">
    <source>
    </source>
</evidence>
<evidence type="ECO:0000269" key="14">
    <source>
    </source>
</evidence>
<evidence type="ECO:0000269" key="15">
    <source>
    </source>
</evidence>
<evidence type="ECO:0000269" key="16">
    <source>
    </source>
</evidence>
<evidence type="ECO:0000305" key="17"/>
<evidence type="ECO:0000305" key="18">
    <source>
    </source>
</evidence>
<evidence type="ECO:0007744" key="19">
    <source>
        <dbReference type="PDB" id="6XO4"/>
    </source>
</evidence>
<evidence type="ECO:0007744" key="20">
    <source>
        <dbReference type="PDB" id="6XOB"/>
    </source>
</evidence>
<evidence type="ECO:0007744" key="21">
    <source>
        <dbReference type="PDB" id="8DWO"/>
    </source>
</evidence>
<evidence type="ECO:0007744" key="22">
    <source>
        <dbReference type="PDB" id="8UA4"/>
    </source>
</evidence>
<evidence type="ECO:0007744" key="23">
    <source>
        <dbReference type="PDB" id="8UA9"/>
    </source>
</evidence>
<evidence type="ECO:0007744" key="24">
    <source>
        <dbReference type="PDB" id="8UFA"/>
    </source>
</evidence>
<evidence type="ECO:0007744" key="25">
    <source>
        <dbReference type="PDB" id="8UFB"/>
    </source>
</evidence>
<evidence type="ECO:0007744" key="26">
    <source>
        <dbReference type="PDB" id="8UFC"/>
    </source>
</evidence>
<name>POLS_EEEV</name>